<keyword id="KW-0002">3D-structure</keyword>
<keyword id="KW-0143">Chaperone</keyword>
<keyword id="KW-0156">Chromatin regulator</keyword>
<keyword id="KW-0963">Cytoplasm</keyword>
<keyword id="KW-0227">DNA damage</keyword>
<keyword id="KW-0234">DNA repair</keyword>
<keyword id="KW-0235">DNA replication</keyword>
<keyword id="KW-0539">Nucleus</keyword>
<keyword id="KW-0597">Phosphoprotein</keyword>
<keyword id="KW-1185">Reference proteome</keyword>
<keyword id="KW-0677">Repeat</keyword>
<keyword id="KW-0853">WD repeat</keyword>
<accession>O13985</accession>
<reference key="1">
    <citation type="journal article" date="2002" name="Nature">
        <title>The genome sequence of Schizosaccharomyces pombe.</title>
        <authorList>
            <person name="Wood V."/>
            <person name="Gwilliam R."/>
            <person name="Rajandream M.A."/>
            <person name="Lyne M.H."/>
            <person name="Lyne R."/>
            <person name="Stewart A."/>
            <person name="Sgouros J.G."/>
            <person name="Peat N."/>
            <person name="Hayles J."/>
            <person name="Baker S.G."/>
            <person name="Basham D."/>
            <person name="Bowman S."/>
            <person name="Brooks K."/>
            <person name="Brown D."/>
            <person name="Brown S."/>
            <person name="Chillingworth T."/>
            <person name="Churcher C.M."/>
            <person name="Collins M."/>
            <person name="Connor R."/>
            <person name="Cronin A."/>
            <person name="Davis P."/>
            <person name="Feltwell T."/>
            <person name="Fraser A."/>
            <person name="Gentles S."/>
            <person name="Goble A."/>
            <person name="Hamlin N."/>
            <person name="Harris D.E."/>
            <person name="Hidalgo J."/>
            <person name="Hodgson G."/>
            <person name="Holroyd S."/>
            <person name="Hornsby T."/>
            <person name="Howarth S."/>
            <person name="Huckle E.J."/>
            <person name="Hunt S."/>
            <person name="Jagels K."/>
            <person name="James K.D."/>
            <person name="Jones L."/>
            <person name="Jones M."/>
            <person name="Leather S."/>
            <person name="McDonald S."/>
            <person name="McLean J."/>
            <person name="Mooney P."/>
            <person name="Moule S."/>
            <person name="Mungall K.L."/>
            <person name="Murphy L.D."/>
            <person name="Niblett D."/>
            <person name="Odell C."/>
            <person name="Oliver K."/>
            <person name="O'Neil S."/>
            <person name="Pearson D."/>
            <person name="Quail M.A."/>
            <person name="Rabbinowitsch E."/>
            <person name="Rutherford K.M."/>
            <person name="Rutter S."/>
            <person name="Saunders D."/>
            <person name="Seeger K."/>
            <person name="Sharp S."/>
            <person name="Skelton J."/>
            <person name="Simmonds M.N."/>
            <person name="Squares R."/>
            <person name="Squares S."/>
            <person name="Stevens K."/>
            <person name="Taylor K."/>
            <person name="Taylor R.G."/>
            <person name="Tivey A."/>
            <person name="Walsh S.V."/>
            <person name="Warren T."/>
            <person name="Whitehead S."/>
            <person name="Woodward J.R."/>
            <person name="Volckaert G."/>
            <person name="Aert R."/>
            <person name="Robben J."/>
            <person name="Grymonprez B."/>
            <person name="Weltjens I."/>
            <person name="Vanstreels E."/>
            <person name="Rieger M."/>
            <person name="Schaefer M."/>
            <person name="Mueller-Auer S."/>
            <person name="Gabel C."/>
            <person name="Fuchs M."/>
            <person name="Duesterhoeft A."/>
            <person name="Fritzc C."/>
            <person name="Holzer E."/>
            <person name="Moestl D."/>
            <person name="Hilbert H."/>
            <person name="Borzym K."/>
            <person name="Langer I."/>
            <person name="Beck A."/>
            <person name="Lehrach H."/>
            <person name="Reinhardt R."/>
            <person name="Pohl T.M."/>
            <person name="Eger P."/>
            <person name="Zimmermann W."/>
            <person name="Wedler H."/>
            <person name="Wambutt R."/>
            <person name="Purnelle B."/>
            <person name="Goffeau A."/>
            <person name="Cadieu E."/>
            <person name="Dreano S."/>
            <person name="Gloux S."/>
            <person name="Lelaure V."/>
            <person name="Mottier S."/>
            <person name="Galibert F."/>
            <person name="Aves S.J."/>
            <person name="Xiang Z."/>
            <person name="Hunt C."/>
            <person name="Moore K."/>
            <person name="Hurst S.M."/>
            <person name="Lucas M."/>
            <person name="Rochet M."/>
            <person name="Gaillardin C."/>
            <person name="Tallada V.A."/>
            <person name="Garzon A."/>
            <person name="Thode G."/>
            <person name="Daga R.R."/>
            <person name="Cruzado L."/>
            <person name="Jimenez J."/>
            <person name="Sanchez M."/>
            <person name="del Rey F."/>
            <person name="Benito J."/>
            <person name="Dominguez A."/>
            <person name="Revuelta J.L."/>
            <person name="Moreno S."/>
            <person name="Armstrong J."/>
            <person name="Forsburg S.L."/>
            <person name="Cerutti L."/>
            <person name="Lowe T."/>
            <person name="McCombie W.R."/>
            <person name="Paulsen I."/>
            <person name="Potashkin J."/>
            <person name="Shpakovski G.V."/>
            <person name="Ussery D."/>
            <person name="Barrell B.G."/>
            <person name="Nurse P."/>
        </authorList>
    </citation>
    <scope>NUCLEOTIDE SEQUENCE [LARGE SCALE GENOMIC DNA]</scope>
    <source>
        <strain>972 / ATCC 24843</strain>
    </source>
</reference>
<reference key="2">
    <citation type="journal article" date="2006" name="Nat. Biotechnol.">
        <title>ORFeome cloning and global analysis of protein localization in the fission yeast Schizosaccharomyces pombe.</title>
        <authorList>
            <person name="Matsuyama A."/>
            <person name="Arai R."/>
            <person name="Yashiroda Y."/>
            <person name="Shirai A."/>
            <person name="Kamata A."/>
            <person name="Sekido S."/>
            <person name="Kobayashi Y."/>
            <person name="Hashimoto A."/>
            <person name="Hamamoto M."/>
            <person name="Hiraoka Y."/>
            <person name="Horinouchi S."/>
            <person name="Yoshida M."/>
        </authorList>
    </citation>
    <scope>SUBCELLULAR LOCATION [LARGE SCALE ANALYSIS]</scope>
</reference>
<reference key="3">
    <citation type="journal article" date="2008" name="J. Proteome Res.">
        <title>Phosphoproteome analysis of fission yeast.</title>
        <authorList>
            <person name="Wilson-Grady J.T."/>
            <person name="Villen J."/>
            <person name="Gygi S.P."/>
        </authorList>
    </citation>
    <scope>PHOSPHORYLATION [LARGE SCALE ANALYSIS] AT SER-468; SER-470 AND SER-473</scope>
    <scope>IDENTIFICATION BY MASS SPECTROMETRY</scope>
</reference>
<reference key="4">
    <citation type="journal article" date="2008" name="Genes Cells">
        <title>Fission yeast chromatin assembly factor 1 assists in the replication-coupled maintenance of heterochromatin.</title>
        <authorList>
            <person name="Dohke K."/>
            <person name="Miyazaki S."/>
            <person name="Tanaka K."/>
            <person name="Urano T."/>
            <person name="Grewal S.I."/>
            <person name="Murakami Y."/>
        </authorList>
    </citation>
    <scope>FUNCTION</scope>
    <scope>IDENTIFICATION IN THE CAF-1 COMPLEX</scope>
    <scope>INTERACTION WITH PCN1 AND SWI6</scope>
    <scope>SUBCELLULAR LOCATION</scope>
    <scope>DISRUPTION PHENOTYPE</scope>
</reference>
<reference key="5">
    <citation type="journal article" date="2024" name="Elife">
        <title>Disordered regions and folded modules in CAF-1 promote histone deposition in Schizosaccharomyces pombe.</title>
        <authorList>
            <person name="Ouasti F."/>
            <person name="Audin M."/>
            <person name="Freon K."/>
            <person name="Quivy J.P."/>
            <person name="Tachekort M."/>
            <person name="Cesard E."/>
            <person name="Thureau A."/>
            <person name="Ropars V."/>
            <person name="Fernandez Varela P."/>
            <person name="Moal G."/>
            <person name="Soumana-Amadou I."/>
            <person name="Uryga A."/>
            <person name="Legrand P."/>
            <person name="Andreani J."/>
            <person name="Guerois R."/>
            <person name="Almouzni G."/>
            <person name="Lambert S."/>
            <person name="Ochsenbein F."/>
        </authorList>
    </citation>
    <scope>FUNCTION</scope>
    <scope>IDENTIFICATION IN THE CAF-1 COMPLEX</scope>
    <scope>INTERACTION WITH HISTONE H3-H4 DIMERS</scope>
    <scope>SUBCELLULAR LOCATION</scope>
</reference>
<comment type="function">
    <text evidence="5 6">Acts as a component of the histone chaperone complex chromatin assembly factor 1 (CAF-1), which assembles histone octamers onto DNA during replication and repair (PubMed:38376141). CAF-1 performs the first step of the nucleosome assembly process, bringing newly synthesized histones H3 and H4 to replicating DNA; histones H2A/H2B can bind to this chromatin precursor subsequent to DNA replication to complete the histone octamer (PubMed:38376141). Plays a role in the maintenance of heterochromatin (PubMed:18761674).</text>
</comment>
<comment type="subunit">
    <text evidence="5 6">Component of chromatin assembly factor 1 (CAF-1), composed of pcf1, pcf2 and pcf3 (PubMed:18761674, PubMed:38376141). Interacts with pcn1/PCNA during S-phase (PubMed:18761674). Interacts with swi6 at the G1/S-phase transition and early S-phase, but not in the G2 phase (PubMed:18761674). The CAF-1 complex interacts with histone H3-H4 dimers (PubMed:38376141).</text>
</comment>
<comment type="interaction">
    <interactant intactId="EBI-16123749">
        <id>O13985</id>
    </interactant>
    <interactant intactId="EBI-1560762">
        <id>Q1MTN9</id>
        <label>rlf2</label>
    </interactant>
    <organismsDiffer>false</organismsDiffer>
    <experiments>2</experiments>
</comment>
<comment type="subcellular location">
    <subcellularLocation>
        <location evidence="3">Cytoplasm</location>
    </subcellularLocation>
    <subcellularLocation>
        <location evidence="3 5 6">Nucleus</location>
    </subcellularLocation>
    <text evidence="5 6">Forms discrete foci in S-phase but not in G2-phase (PubMed:38376141). Localizes to replicating chromatin (PubMed:18761674).</text>
</comment>
<comment type="disruption phenotype">
    <text evidence="5">Viable vegetative cells but sporulation is inhibited.</text>
</comment>
<comment type="similarity">
    <text evidence="7">Belongs to the WD repeat HIR1 family.</text>
</comment>
<sequence>MRAEVLQIRWHYDANDDHTPIYSVDFQKNSLNKFATCGGDSKIRIWQLITSESSTKVEYLSTLSRHTQAVNVVRFNPEGNILATAGDEGTIMLWVPTNTPITTLADDAEELALAKEYWKVKIVCRSMGSEIYDLCWSVDSNFLIAGAMDNSLRLYDAHTGQLLTQKFDHSHYVQGVCWDPLNQYIVSESSDRSICLYEIQEEKKNPKKFQLVLKSRICRIEYNVTKFELISVTKPLNNDESSGISEPIETSNNNESPVSKHEALSSTANIVKDGSLERTEPPNSLNSKISYSLYCNETLVSFFRRPAFSPDGLLLVTPAGRLRPHGQPNFEVPYTAYIYTRGSITKQPVACLNGFKKPVIAVRFSPIHYELNSFSNFSFTSVSFNLPYRMVFAVACQDAVYIYDTQTCKPFYRAVNLHYSNLTDIAWNDDGNVLLMTSIDGFCSVITFEPGELGVKSQHKISLPEKRSASPSSIDDSQDNTAGGPATTTLIPRKVESSKVSKKRIAPTPVYP</sequence>
<feature type="chain" id="PRO_0000316555" description="Chromatin assembly factor 1 subunit B">
    <location>
        <begin position="1"/>
        <end position="512"/>
    </location>
</feature>
<feature type="repeat" description="WD 1">
    <location>
        <begin position="16"/>
        <end position="56"/>
    </location>
</feature>
<feature type="repeat" description="WD 2">
    <location>
        <begin position="65"/>
        <end position="105"/>
    </location>
</feature>
<feature type="repeat" description="WD 3">
    <location>
        <begin position="126"/>
        <end position="165"/>
    </location>
</feature>
<feature type="repeat" description="WD 4">
    <location>
        <begin position="168"/>
        <end position="207"/>
    </location>
</feature>
<feature type="repeat" description="WD 5">
    <location>
        <begin position="373"/>
        <end position="413"/>
    </location>
</feature>
<feature type="repeat" description="WD 6">
    <location>
        <begin position="417"/>
        <end position="458"/>
    </location>
</feature>
<feature type="region of interest" description="Disordered" evidence="2">
    <location>
        <begin position="239"/>
        <end position="261"/>
    </location>
</feature>
<feature type="region of interest" description="Disordered" evidence="2">
    <location>
        <begin position="459"/>
        <end position="512"/>
    </location>
</feature>
<feature type="compositionally biased region" description="Polar residues" evidence="2">
    <location>
        <begin position="239"/>
        <end position="257"/>
    </location>
</feature>
<feature type="compositionally biased region" description="Polar residues" evidence="2">
    <location>
        <begin position="469"/>
        <end position="490"/>
    </location>
</feature>
<feature type="modified residue" description="Phosphoserine" evidence="4">
    <location>
        <position position="468"/>
    </location>
</feature>
<feature type="modified residue" description="Phosphoserine" evidence="4">
    <location>
        <position position="470"/>
    </location>
</feature>
<feature type="modified residue" description="Phosphoserine" evidence="4">
    <location>
        <position position="473"/>
    </location>
</feature>
<feature type="strand" evidence="9">
    <location>
        <begin position="508"/>
        <end position="511"/>
    </location>
</feature>
<proteinExistence type="evidence at protein level"/>
<organism>
    <name type="scientific">Schizosaccharomyces pombe (strain 972 / ATCC 24843)</name>
    <name type="common">Fission yeast</name>
    <dbReference type="NCBI Taxonomy" id="284812"/>
    <lineage>
        <taxon>Eukaryota</taxon>
        <taxon>Fungi</taxon>
        <taxon>Dikarya</taxon>
        <taxon>Ascomycota</taxon>
        <taxon>Taphrinomycotina</taxon>
        <taxon>Schizosaccharomycetes</taxon>
        <taxon>Schizosaccharomycetales</taxon>
        <taxon>Schizosaccharomycetaceae</taxon>
        <taxon>Schizosaccharomyces</taxon>
    </lineage>
</organism>
<name>CAF1B_SCHPO</name>
<evidence type="ECO:0000250" key="1">
    <source>
        <dbReference type="UniProtKB" id="Q13112"/>
    </source>
</evidence>
<evidence type="ECO:0000256" key="2">
    <source>
        <dbReference type="SAM" id="MobiDB-lite"/>
    </source>
</evidence>
<evidence type="ECO:0000269" key="3">
    <source>
    </source>
</evidence>
<evidence type="ECO:0000269" key="4">
    <source>
    </source>
</evidence>
<evidence type="ECO:0000269" key="5">
    <source>
    </source>
</evidence>
<evidence type="ECO:0000269" key="6">
    <source>
    </source>
</evidence>
<evidence type="ECO:0000305" key="7"/>
<evidence type="ECO:0000312" key="8">
    <source>
        <dbReference type="PomBase" id="SPAC26H5.03"/>
    </source>
</evidence>
<evidence type="ECO:0007829" key="9">
    <source>
        <dbReference type="PDB" id="2Z3F"/>
    </source>
</evidence>
<gene>
    <name evidence="8" type="primary">pcf2</name>
    <name type="ORF">SPAC26H5.03</name>
</gene>
<protein>
    <recommendedName>
        <fullName evidence="1">Chromatin assembly factor 1 subunit B</fullName>
        <shortName evidence="1">CAF-1 subunit B</shortName>
    </recommendedName>
    <alternativeName>
        <fullName evidence="8">Pombe CAF-1 first subunit</fullName>
    </alternativeName>
</protein>
<dbReference type="EMBL" id="CU329670">
    <property type="protein sequence ID" value="CAB16189.1"/>
    <property type="molecule type" value="Genomic_DNA"/>
</dbReference>
<dbReference type="PIR" id="T38422">
    <property type="entry name" value="T38422"/>
</dbReference>
<dbReference type="RefSeq" id="NP_594450.1">
    <property type="nucleotide sequence ID" value="NM_001019879.2"/>
</dbReference>
<dbReference type="PDB" id="2Z3F">
    <property type="method" value="X-ray"/>
    <property type="resolution" value="2.70 A"/>
    <property type="chains" value="I/J/K/L/M/N/O/P/Q/R/T=493-512"/>
</dbReference>
<dbReference type="PDBsum" id="2Z3F"/>
<dbReference type="SMR" id="O13985"/>
<dbReference type="BioGRID" id="278548">
    <property type="interactions" value="44"/>
</dbReference>
<dbReference type="ComplexPortal" id="CPX-25743">
    <property type="entry name" value="Chromatin assembly factor 1 complex"/>
</dbReference>
<dbReference type="DIP" id="DIP-61057N"/>
<dbReference type="FunCoup" id="O13985">
    <property type="interactions" value="569"/>
</dbReference>
<dbReference type="IntAct" id="O13985">
    <property type="interactions" value="2"/>
</dbReference>
<dbReference type="STRING" id="284812.O13985"/>
<dbReference type="iPTMnet" id="O13985"/>
<dbReference type="PaxDb" id="4896-SPAC26H5.03.1"/>
<dbReference type="EnsemblFungi" id="SPAC26H5.03.1">
    <property type="protein sequence ID" value="SPAC26H5.03.1:pep"/>
    <property type="gene ID" value="SPAC26H5.03"/>
</dbReference>
<dbReference type="GeneID" id="2542071"/>
<dbReference type="KEGG" id="spo:2542071"/>
<dbReference type="PomBase" id="SPAC26H5.03"/>
<dbReference type="VEuPathDB" id="FungiDB:SPAC26H5.03"/>
<dbReference type="eggNOG" id="KOG1009">
    <property type="taxonomic scope" value="Eukaryota"/>
</dbReference>
<dbReference type="HOGENOM" id="CLU_010127_0_0_1"/>
<dbReference type="InParanoid" id="O13985"/>
<dbReference type="OMA" id="QIYWHES"/>
<dbReference type="PhylomeDB" id="O13985"/>
<dbReference type="EvolutionaryTrace" id="O13985"/>
<dbReference type="PRO" id="PR:O13985"/>
<dbReference type="Proteomes" id="UP000002485">
    <property type="component" value="Chromosome I"/>
</dbReference>
<dbReference type="GO" id="GO:0033186">
    <property type="term" value="C:CAF-1 complex"/>
    <property type="evidence" value="ECO:0000314"/>
    <property type="project" value="PomBase"/>
</dbReference>
<dbReference type="GO" id="GO:0005829">
    <property type="term" value="C:cytosol"/>
    <property type="evidence" value="ECO:0007005"/>
    <property type="project" value="PomBase"/>
</dbReference>
<dbReference type="GO" id="GO:0043596">
    <property type="term" value="C:nuclear replication fork"/>
    <property type="evidence" value="ECO:0000314"/>
    <property type="project" value="PomBase"/>
</dbReference>
<dbReference type="GO" id="GO:0005634">
    <property type="term" value="C:nucleus"/>
    <property type="evidence" value="ECO:0000314"/>
    <property type="project" value="PomBase"/>
</dbReference>
<dbReference type="GO" id="GO:0000510">
    <property type="term" value="F:H3-H4 histone complex chaperone activity"/>
    <property type="evidence" value="ECO:0000305"/>
    <property type="project" value="PomBase"/>
</dbReference>
<dbReference type="GO" id="GO:0006281">
    <property type="term" value="P:DNA repair"/>
    <property type="evidence" value="ECO:0007669"/>
    <property type="project" value="UniProtKB-KW"/>
</dbReference>
<dbReference type="GO" id="GO:0140861">
    <property type="term" value="P:DNA repair-dependent chromatin remodeling"/>
    <property type="evidence" value="ECO:0000305"/>
    <property type="project" value="PomBase"/>
</dbReference>
<dbReference type="GO" id="GO:0006335">
    <property type="term" value="P:DNA replication-dependent chromatin assembly"/>
    <property type="evidence" value="ECO:0000305"/>
    <property type="project" value="PomBase"/>
</dbReference>
<dbReference type="GO" id="GO:1990426">
    <property type="term" value="P:mitotic recombination-dependent replication fork processing"/>
    <property type="evidence" value="ECO:0000314"/>
    <property type="project" value="PomBase"/>
</dbReference>
<dbReference type="GO" id="GO:0006334">
    <property type="term" value="P:nucleosome assembly"/>
    <property type="evidence" value="ECO:0000318"/>
    <property type="project" value="GO_Central"/>
</dbReference>
<dbReference type="FunFam" id="2.130.10.10:FF:002898">
    <property type="entry name" value="Uncharacterized WD repeat-containing protein C26H5.03"/>
    <property type="match status" value="1"/>
</dbReference>
<dbReference type="Gene3D" id="2.130.10.10">
    <property type="entry name" value="YVTN repeat-like/Quinoprotein amine dehydrogenase"/>
    <property type="match status" value="2"/>
</dbReference>
<dbReference type="IDEAL" id="IID50257"/>
<dbReference type="InterPro" id="IPR055410">
    <property type="entry name" value="CAF1B_HIR1_beta-prop"/>
</dbReference>
<dbReference type="InterPro" id="IPR045145">
    <property type="entry name" value="PTHR15271"/>
</dbReference>
<dbReference type="InterPro" id="IPR015943">
    <property type="entry name" value="WD40/YVTN_repeat-like_dom_sf"/>
</dbReference>
<dbReference type="InterPro" id="IPR036322">
    <property type="entry name" value="WD40_repeat_dom_sf"/>
</dbReference>
<dbReference type="InterPro" id="IPR001680">
    <property type="entry name" value="WD40_rpt"/>
</dbReference>
<dbReference type="PANTHER" id="PTHR15271">
    <property type="entry name" value="CHROMATIN ASSEMBLY FACTOR 1 SUBUNIT B"/>
    <property type="match status" value="1"/>
</dbReference>
<dbReference type="PANTHER" id="PTHR15271:SF4">
    <property type="entry name" value="CHROMATIN ASSEMBLY FACTOR 1 SUBUNIT B"/>
    <property type="match status" value="1"/>
</dbReference>
<dbReference type="Pfam" id="PF24105">
    <property type="entry name" value="Beta-prop_CAF1B_HIR1"/>
    <property type="match status" value="2"/>
</dbReference>
<dbReference type="SMART" id="SM00320">
    <property type="entry name" value="WD40"/>
    <property type="match status" value="6"/>
</dbReference>
<dbReference type="SUPFAM" id="SSF50978">
    <property type="entry name" value="WD40 repeat-like"/>
    <property type="match status" value="1"/>
</dbReference>
<dbReference type="PROSITE" id="PS50082">
    <property type="entry name" value="WD_REPEATS_2"/>
    <property type="match status" value="2"/>
</dbReference>
<dbReference type="PROSITE" id="PS50294">
    <property type="entry name" value="WD_REPEATS_REGION"/>
    <property type="match status" value="1"/>
</dbReference>